<evidence type="ECO:0000255" key="1">
    <source>
        <dbReference type="HAMAP-Rule" id="MF_00402"/>
    </source>
</evidence>
<evidence type="ECO:0000305" key="2"/>
<gene>
    <name evidence="1" type="primary">rplS</name>
    <name type="ordered locus">BB3443</name>
</gene>
<feature type="chain" id="PRO_0000163418" description="Large ribosomal subunit protein bL19">
    <location>
        <begin position="1"/>
        <end position="126"/>
    </location>
</feature>
<protein>
    <recommendedName>
        <fullName evidence="1">Large ribosomal subunit protein bL19</fullName>
    </recommendedName>
    <alternativeName>
        <fullName evidence="2">50S ribosomal protein L19</fullName>
    </alternativeName>
</protein>
<keyword id="KW-0687">Ribonucleoprotein</keyword>
<keyword id="KW-0689">Ribosomal protein</keyword>
<comment type="function">
    <text evidence="1">This protein is located at the 30S-50S ribosomal subunit interface and may play a role in the structure and function of the aminoacyl-tRNA binding site.</text>
</comment>
<comment type="similarity">
    <text evidence="1">Belongs to the bacterial ribosomal protein bL19 family.</text>
</comment>
<sequence length="126" mass="13946">MNLIAILEQEEIARLTGGNAVTEFAPGDTVVVSVNVVEGTRKRVQAFEGVVIAKRNRGLNSSFIVRKISSGEAVERTFQLYSPQIAGIEVKRRGDVRRAKLYYLRSRSGKSARIKEKLVLKKAKSA</sequence>
<dbReference type="EMBL" id="BX640447">
    <property type="protein sequence ID" value="CAE33935.1"/>
    <property type="molecule type" value="Genomic_DNA"/>
</dbReference>
<dbReference type="RefSeq" id="WP_003813315.1">
    <property type="nucleotide sequence ID" value="NC_002927.3"/>
</dbReference>
<dbReference type="SMR" id="Q7WGW8"/>
<dbReference type="GeneID" id="93203424"/>
<dbReference type="KEGG" id="bbr:BB3443"/>
<dbReference type="eggNOG" id="COG0335">
    <property type="taxonomic scope" value="Bacteria"/>
</dbReference>
<dbReference type="HOGENOM" id="CLU_103507_1_0_4"/>
<dbReference type="Proteomes" id="UP000001027">
    <property type="component" value="Chromosome"/>
</dbReference>
<dbReference type="GO" id="GO:0022625">
    <property type="term" value="C:cytosolic large ribosomal subunit"/>
    <property type="evidence" value="ECO:0007669"/>
    <property type="project" value="TreeGrafter"/>
</dbReference>
<dbReference type="GO" id="GO:0003735">
    <property type="term" value="F:structural constituent of ribosome"/>
    <property type="evidence" value="ECO:0007669"/>
    <property type="project" value="InterPro"/>
</dbReference>
<dbReference type="GO" id="GO:0006412">
    <property type="term" value="P:translation"/>
    <property type="evidence" value="ECO:0007669"/>
    <property type="project" value="UniProtKB-UniRule"/>
</dbReference>
<dbReference type="FunFam" id="2.30.30.790:FF:000001">
    <property type="entry name" value="50S ribosomal protein L19"/>
    <property type="match status" value="1"/>
</dbReference>
<dbReference type="Gene3D" id="2.30.30.790">
    <property type="match status" value="1"/>
</dbReference>
<dbReference type="HAMAP" id="MF_00402">
    <property type="entry name" value="Ribosomal_bL19"/>
    <property type="match status" value="1"/>
</dbReference>
<dbReference type="InterPro" id="IPR001857">
    <property type="entry name" value="Ribosomal_bL19"/>
</dbReference>
<dbReference type="InterPro" id="IPR018257">
    <property type="entry name" value="Ribosomal_bL19_CS"/>
</dbReference>
<dbReference type="InterPro" id="IPR038657">
    <property type="entry name" value="Ribosomal_bL19_sf"/>
</dbReference>
<dbReference type="InterPro" id="IPR008991">
    <property type="entry name" value="Translation_prot_SH3-like_sf"/>
</dbReference>
<dbReference type="NCBIfam" id="TIGR01024">
    <property type="entry name" value="rplS_bact"/>
    <property type="match status" value="1"/>
</dbReference>
<dbReference type="PANTHER" id="PTHR15680:SF9">
    <property type="entry name" value="LARGE RIBOSOMAL SUBUNIT PROTEIN BL19M"/>
    <property type="match status" value="1"/>
</dbReference>
<dbReference type="PANTHER" id="PTHR15680">
    <property type="entry name" value="RIBOSOMAL PROTEIN L19"/>
    <property type="match status" value="1"/>
</dbReference>
<dbReference type="Pfam" id="PF01245">
    <property type="entry name" value="Ribosomal_L19"/>
    <property type="match status" value="1"/>
</dbReference>
<dbReference type="PIRSF" id="PIRSF002191">
    <property type="entry name" value="Ribosomal_L19"/>
    <property type="match status" value="1"/>
</dbReference>
<dbReference type="PRINTS" id="PR00061">
    <property type="entry name" value="RIBOSOMALL19"/>
</dbReference>
<dbReference type="SUPFAM" id="SSF50104">
    <property type="entry name" value="Translation proteins SH3-like domain"/>
    <property type="match status" value="1"/>
</dbReference>
<dbReference type="PROSITE" id="PS01015">
    <property type="entry name" value="RIBOSOMAL_L19"/>
    <property type="match status" value="1"/>
</dbReference>
<reference key="1">
    <citation type="journal article" date="2003" name="Nat. Genet.">
        <title>Comparative analysis of the genome sequences of Bordetella pertussis, Bordetella parapertussis and Bordetella bronchiseptica.</title>
        <authorList>
            <person name="Parkhill J."/>
            <person name="Sebaihia M."/>
            <person name="Preston A."/>
            <person name="Murphy L.D."/>
            <person name="Thomson N.R."/>
            <person name="Harris D.E."/>
            <person name="Holden M.T.G."/>
            <person name="Churcher C.M."/>
            <person name="Bentley S.D."/>
            <person name="Mungall K.L."/>
            <person name="Cerdeno-Tarraga A.-M."/>
            <person name="Temple L."/>
            <person name="James K.D."/>
            <person name="Harris B."/>
            <person name="Quail M.A."/>
            <person name="Achtman M."/>
            <person name="Atkin R."/>
            <person name="Baker S."/>
            <person name="Basham D."/>
            <person name="Bason N."/>
            <person name="Cherevach I."/>
            <person name="Chillingworth T."/>
            <person name="Collins M."/>
            <person name="Cronin A."/>
            <person name="Davis P."/>
            <person name="Doggett J."/>
            <person name="Feltwell T."/>
            <person name="Goble A."/>
            <person name="Hamlin N."/>
            <person name="Hauser H."/>
            <person name="Holroyd S."/>
            <person name="Jagels K."/>
            <person name="Leather S."/>
            <person name="Moule S."/>
            <person name="Norberczak H."/>
            <person name="O'Neil S."/>
            <person name="Ormond D."/>
            <person name="Price C."/>
            <person name="Rabbinowitsch E."/>
            <person name="Rutter S."/>
            <person name="Sanders M."/>
            <person name="Saunders D."/>
            <person name="Seeger K."/>
            <person name="Sharp S."/>
            <person name="Simmonds M."/>
            <person name="Skelton J."/>
            <person name="Squares R."/>
            <person name="Squares S."/>
            <person name="Stevens K."/>
            <person name="Unwin L."/>
            <person name="Whitehead S."/>
            <person name="Barrell B.G."/>
            <person name="Maskell D.J."/>
        </authorList>
    </citation>
    <scope>NUCLEOTIDE SEQUENCE [LARGE SCALE GENOMIC DNA]</scope>
    <source>
        <strain>ATCC BAA-588 / NCTC 13252 / RB50</strain>
    </source>
</reference>
<name>RL19_BORBR</name>
<accession>Q7WGW8</accession>
<proteinExistence type="inferred from homology"/>
<organism>
    <name type="scientific">Bordetella bronchiseptica (strain ATCC BAA-588 / NCTC 13252 / RB50)</name>
    <name type="common">Alcaligenes bronchisepticus</name>
    <dbReference type="NCBI Taxonomy" id="257310"/>
    <lineage>
        <taxon>Bacteria</taxon>
        <taxon>Pseudomonadati</taxon>
        <taxon>Pseudomonadota</taxon>
        <taxon>Betaproteobacteria</taxon>
        <taxon>Burkholderiales</taxon>
        <taxon>Alcaligenaceae</taxon>
        <taxon>Bordetella</taxon>
    </lineage>
</organism>